<reference key="1">
    <citation type="submission" date="2007-05" db="EMBL/GenBank/DDBJ databases">
        <title>Complete sequence of chromosome of Psychrobacter sp. PRwf-1.</title>
        <authorList>
            <consortium name="US DOE Joint Genome Institute"/>
            <person name="Copeland A."/>
            <person name="Lucas S."/>
            <person name="Lapidus A."/>
            <person name="Barry K."/>
            <person name="Detter J.C."/>
            <person name="Glavina del Rio T."/>
            <person name="Hammon N."/>
            <person name="Israni S."/>
            <person name="Dalin E."/>
            <person name="Tice H."/>
            <person name="Pitluck S."/>
            <person name="Chain P."/>
            <person name="Malfatti S."/>
            <person name="Shin M."/>
            <person name="Vergez L."/>
            <person name="Schmutz J."/>
            <person name="Larimer F."/>
            <person name="Land M."/>
            <person name="Hauser L."/>
            <person name="Kyrpides N."/>
            <person name="Kim E."/>
            <person name="Tiedje J."/>
            <person name="Richardson P."/>
        </authorList>
    </citation>
    <scope>NUCLEOTIDE SEQUENCE [LARGE SCALE GENOMIC DNA]</scope>
    <source>
        <strain>PRwf-1</strain>
    </source>
</reference>
<gene>
    <name evidence="1" type="primary">fadB</name>
    <name type="ordered locus">PsycPRwf_2100</name>
</gene>
<proteinExistence type="inferred from homology"/>
<accession>A5WH99</accession>
<protein>
    <recommendedName>
        <fullName evidence="1">Fatty acid oxidation complex subunit alpha</fullName>
    </recommendedName>
    <domain>
        <recommendedName>
            <fullName evidence="1">Enoyl-CoA hydratase/Delta(3)-cis-Delta(2)-trans-enoyl-CoA isomerase/3-hydroxybutyryl-CoA epimerase</fullName>
            <ecNumber evidence="1">4.2.1.17</ecNumber>
            <ecNumber evidence="1">5.1.2.3</ecNumber>
            <ecNumber evidence="1">5.3.3.8</ecNumber>
        </recommendedName>
    </domain>
    <domain>
        <recommendedName>
            <fullName evidence="1">3-hydroxyacyl-CoA dehydrogenase</fullName>
            <ecNumber evidence="1">1.1.1.35</ecNumber>
        </recommendedName>
    </domain>
</protein>
<feature type="chain" id="PRO_1000073634" description="Fatty acid oxidation complex subunit alpha">
    <location>
        <begin position="1"/>
        <end position="719"/>
    </location>
</feature>
<feature type="region of interest" description="Enoyl-CoA hydratase/isomerase" evidence="1">
    <location>
        <begin position="1"/>
        <end position="190"/>
    </location>
</feature>
<feature type="region of interest" description="3-hydroxyacyl-CoA dehydrogenase" evidence="1">
    <location>
        <begin position="313"/>
        <end position="719"/>
    </location>
</feature>
<feature type="active site" description="For 3-hydroxyacyl-CoA dehydrogenase activity" evidence="1">
    <location>
        <position position="452"/>
    </location>
</feature>
<feature type="binding site" evidence="1">
    <location>
        <position position="298"/>
    </location>
    <ligand>
        <name>substrate</name>
    </ligand>
</feature>
<feature type="binding site" evidence="1">
    <location>
        <position position="326"/>
    </location>
    <ligand>
        <name>NAD(+)</name>
        <dbReference type="ChEBI" id="CHEBI:57540"/>
    </ligand>
</feature>
<feature type="binding site" evidence="1">
    <location>
        <position position="345"/>
    </location>
    <ligand>
        <name>NAD(+)</name>
        <dbReference type="ChEBI" id="CHEBI:57540"/>
    </ligand>
</feature>
<feature type="binding site" evidence="1">
    <location>
        <begin position="402"/>
        <end position="404"/>
    </location>
    <ligand>
        <name>NAD(+)</name>
        <dbReference type="ChEBI" id="CHEBI:57540"/>
    </ligand>
</feature>
<feature type="binding site" evidence="1">
    <location>
        <position position="409"/>
    </location>
    <ligand>
        <name>NAD(+)</name>
        <dbReference type="ChEBI" id="CHEBI:57540"/>
    </ligand>
</feature>
<feature type="binding site" evidence="1">
    <location>
        <position position="431"/>
    </location>
    <ligand>
        <name>NAD(+)</name>
        <dbReference type="ChEBI" id="CHEBI:57540"/>
    </ligand>
</feature>
<feature type="binding site" evidence="1">
    <location>
        <position position="455"/>
    </location>
    <ligand>
        <name>NAD(+)</name>
        <dbReference type="ChEBI" id="CHEBI:57540"/>
    </ligand>
</feature>
<feature type="binding site" evidence="1">
    <location>
        <position position="502"/>
    </location>
    <ligand>
        <name>substrate</name>
    </ligand>
</feature>
<feature type="site" description="Important for catalytic activity" evidence="1">
    <location>
        <position position="120"/>
    </location>
</feature>
<feature type="site" description="Important for catalytic activity" evidence="1">
    <location>
        <position position="140"/>
    </location>
</feature>
<sequence length="719" mass="78228">MIYQGNRITVSLLDDGIANMQFNAEGESVNKFDAETNKQFDEAVSALEKADNVKGLIVTSSKGVFIAGADITEFVSHFNKEAAEIEKWIVDINGVFNRFEDLPFPKVAAINGAALGGGCEMTLVCEYRVMGDKAQIGLPETQLGIFPGFGGSVRTPRVIGIDNAVELIATGKAQKPAEALKLGLVDAVVAQDDLQEAAVDLVKKCIAGDLDWQAKREEKLQPVKLNQLEQTMAFSTAKAAIFAKANPKQYPAPAIAIETIEKHVNLGRDEAIKVEAAGFAKAAKTPQAESLVGLFLNDQTVKKLAKQHTKNAHDINEAAVLGAGIMGGGIAYQAASKGLPIIMKDIKSEQLDLGMGEASKLLGKMVERKKMTPAQMGETLSRIRPTLNYGDFGETDIVIEAVVENPKVKHAVLKEVEGLVKDNAILASNTSTISITYLATVLERPENFVGMHFFNPVHRMPLVEVIRGEKSSEEAIATTVALAQRMGKVPVVVNDCPGFLVNRVLFPYFGAFDLLLKQGADFVHVDKVMEKFGWPMGPAYLIDVVGLDTGVHGAEVMAEGFPDRMKPDYKGAIKHLFENNRLGQKNGVGFYKYEKDSRGKPKKTADDATYALLKDTTDTDNQQFDDQTIIDRMMLAFCNETVRCLEDNIVATPSEADMAMIMGVGFPAFRGGPCRYIDQVGLDNYLALCEKYAHLGKAYEAPQKIRDMAAAGETFYPKA</sequence>
<comment type="function">
    <text evidence="1">Involved in the aerobic and anaerobic degradation of long-chain fatty acids via beta-oxidation cycle. Catalyzes the formation of 3-oxoacyl-CoA from enoyl-CoA via L-3-hydroxyacyl-CoA. It can also use D-3-hydroxyacyl-CoA and cis-3-enoyl-CoA as substrate.</text>
</comment>
<comment type="catalytic activity">
    <reaction evidence="1">
        <text>a (3S)-3-hydroxyacyl-CoA + NAD(+) = a 3-oxoacyl-CoA + NADH + H(+)</text>
        <dbReference type="Rhea" id="RHEA:22432"/>
        <dbReference type="ChEBI" id="CHEBI:15378"/>
        <dbReference type="ChEBI" id="CHEBI:57318"/>
        <dbReference type="ChEBI" id="CHEBI:57540"/>
        <dbReference type="ChEBI" id="CHEBI:57945"/>
        <dbReference type="ChEBI" id="CHEBI:90726"/>
        <dbReference type="EC" id="1.1.1.35"/>
    </reaction>
</comment>
<comment type="catalytic activity">
    <reaction evidence="1">
        <text>a (3S)-3-hydroxyacyl-CoA = a (2E)-enoyl-CoA + H2O</text>
        <dbReference type="Rhea" id="RHEA:16105"/>
        <dbReference type="ChEBI" id="CHEBI:15377"/>
        <dbReference type="ChEBI" id="CHEBI:57318"/>
        <dbReference type="ChEBI" id="CHEBI:58856"/>
        <dbReference type="EC" id="4.2.1.17"/>
    </reaction>
</comment>
<comment type="catalytic activity">
    <reaction evidence="1">
        <text>a 4-saturated-(3S)-3-hydroxyacyl-CoA = a (3E)-enoyl-CoA + H2O</text>
        <dbReference type="Rhea" id="RHEA:20724"/>
        <dbReference type="ChEBI" id="CHEBI:15377"/>
        <dbReference type="ChEBI" id="CHEBI:58521"/>
        <dbReference type="ChEBI" id="CHEBI:137480"/>
        <dbReference type="EC" id="4.2.1.17"/>
    </reaction>
</comment>
<comment type="catalytic activity">
    <reaction evidence="1">
        <text>(3S)-3-hydroxybutanoyl-CoA = (3R)-3-hydroxybutanoyl-CoA</text>
        <dbReference type="Rhea" id="RHEA:21760"/>
        <dbReference type="ChEBI" id="CHEBI:57315"/>
        <dbReference type="ChEBI" id="CHEBI:57316"/>
        <dbReference type="EC" id="5.1.2.3"/>
    </reaction>
</comment>
<comment type="catalytic activity">
    <reaction evidence="1">
        <text>a (3Z)-enoyl-CoA = a 4-saturated (2E)-enoyl-CoA</text>
        <dbReference type="Rhea" id="RHEA:45900"/>
        <dbReference type="ChEBI" id="CHEBI:85097"/>
        <dbReference type="ChEBI" id="CHEBI:85489"/>
        <dbReference type="EC" id="5.3.3.8"/>
    </reaction>
</comment>
<comment type="catalytic activity">
    <reaction evidence="1">
        <text>a (3E)-enoyl-CoA = a 4-saturated (2E)-enoyl-CoA</text>
        <dbReference type="Rhea" id="RHEA:45228"/>
        <dbReference type="ChEBI" id="CHEBI:58521"/>
        <dbReference type="ChEBI" id="CHEBI:85097"/>
        <dbReference type="EC" id="5.3.3.8"/>
    </reaction>
</comment>
<comment type="pathway">
    <text evidence="1">Lipid metabolism; fatty acid beta-oxidation.</text>
</comment>
<comment type="subunit">
    <text evidence="1">Heterotetramer of two alpha chains (FadB) and two beta chains (FadA).</text>
</comment>
<comment type="similarity">
    <text evidence="1">In the N-terminal section; belongs to the enoyl-CoA hydratase/isomerase family.</text>
</comment>
<comment type="similarity">
    <text evidence="1">In the C-terminal section; belongs to the 3-hydroxyacyl-CoA dehydrogenase family.</text>
</comment>
<name>FADB_PSYWF</name>
<organism>
    <name type="scientific">Psychrobacter sp. (strain PRwf-1)</name>
    <dbReference type="NCBI Taxonomy" id="349106"/>
    <lineage>
        <taxon>Bacteria</taxon>
        <taxon>Pseudomonadati</taxon>
        <taxon>Pseudomonadota</taxon>
        <taxon>Gammaproteobacteria</taxon>
        <taxon>Moraxellales</taxon>
        <taxon>Moraxellaceae</taxon>
        <taxon>Psychrobacter</taxon>
    </lineage>
</organism>
<keyword id="KW-0276">Fatty acid metabolism</keyword>
<keyword id="KW-0413">Isomerase</keyword>
<keyword id="KW-0442">Lipid degradation</keyword>
<keyword id="KW-0443">Lipid metabolism</keyword>
<keyword id="KW-0456">Lyase</keyword>
<keyword id="KW-0511">Multifunctional enzyme</keyword>
<keyword id="KW-0520">NAD</keyword>
<keyword id="KW-0560">Oxidoreductase</keyword>
<evidence type="ECO:0000255" key="1">
    <source>
        <dbReference type="HAMAP-Rule" id="MF_01621"/>
    </source>
</evidence>
<dbReference type="EC" id="4.2.1.17" evidence="1"/>
<dbReference type="EC" id="5.1.2.3" evidence="1"/>
<dbReference type="EC" id="5.3.3.8" evidence="1"/>
<dbReference type="EC" id="1.1.1.35" evidence="1"/>
<dbReference type="EMBL" id="CP000713">
    <property type="protein sequence ID" value="ABQ95040.1"/>
    <property type="molecule type" value="Genomic_DNA"/>
</dbReference>
<dbReference type="SMR" id="A5WH99"/>
<dbReference type="STRING" id="349106.PsycPRwf_2100"/>
<dbReference type="KEGG" id="prw:PsycPRwf_2100"/>
<dbReference type="eggNOG" id="COG1024">
    <property type="taxonomic scope" value="Bacteria"/>
</dbReference>
<dbReference type="eggNOG" id="COG1250">
    <property type="taxonomic scope" value="Bacteria"/>
</dbReference>
<dbReference type="HOGENOM" id="CLU_009834_16_3_6"/>
<dbReference type="UniPathway" id="UPA00659"/>
<dbReference type="GO" id="GO:0036125">
    <property type="term" value="C:fatty acid beta-oxidation multienzyme complex"/>
    <property type="evidence" value="ECO:0007669"/>
    <property type="project" value="InterPro"/>
</dbReference>
<dbReference type="GO" id="GO:0008692">
    <property type="term" value="F:3-hydroxybutyryl-CoA epimerase activity"/>
    <property type="evidence" value="ECO:0007669"/>
    <property type="project" value="UniProtKB-UniRule"/>
</dbReference>
<dbReference type="GO" id="GO:0004165">
    <property type="term" value="F:delta(3)-delta(2)-enoyl-CoA isomerase activity"/>
    <property type="evidence" value="ECO:0007669"/>
    <property type="project" value="UniProtKB-UniRule"/>
</dbReference>
<dbReference type="GO" id="GO:0004300">
    <property type="term" value="F:enoyl-CoA hydratase activity"/>
    <property type="evidence" value="ECO:0007669"/>
    <property type="project" value="UniProtKB-UniRule"/>
</dbReference>
<dbReference type="GO" id="GO:0016509">
    <property type="term" value="F:long-chain-3-hydroxyacyl-CoA dehydrogenase activity"/>
    <property type="evidence" value="ECO:0007669"/>
    <property type="project" value="TreeGrafter"/>
</dbReference>
<dbReference type="GO" id="GO:0070403">
    <property type="term" value="F:NAD+ binding"/>
    <property type="evidence" value="ECO:0007669"/>
    <property type="project" value="InterPro"/>
</dbReference>
<dbReference type="GO" id="GO:0006635">
    <property type="term" value="P:fatty acid beta-oxidation"/>
    <property type="evidence" value="ECO:0007669"/>
    <property type="project" value="UniProtKB-UniRule"/>
</dbReference>
<dbReference type="CDD" id="cd06558">
    <property type="entry name" value="crotonase-like"/>
    <property type="match status" value="1"/>
</dbReference>
<dbReference type="FunFam" id="3.40.50.720:FF:000009">
    <property type="entry name" value="Fatty oxidation complex, alpha subunit"/>
    <property type="match status" value="1"/>
</dbReference>
<dbReference type="Gene3D" id="1.10.1040.50">
    <property type="match status" value="1"/>
</dbReference>
<dbReference type="Gene3D" id="3.90.226.10">
    <property type="entry name" value="2-enoyl-CoA Hydratase, Chain A, domain 1"/>
    <property type="match status" value="1"/>
</dbReference>
<dbReference type="Gene3D" id="3.40.50.720">
    <property type="entry name" value="NAD(P)-binding Rossmann-like Domain"/>
    <property type="match status" value="1"/>
</dbReference>
<dbReference type="HAMAP" id="MF_01621">
    <property type="entry name" value="FadB"/>
    <property type="match status" value="1"/>
</dbReference>
<dbReference type="InterPro" id="IPR006180">
    <property type="entry name" value="3-OHacyl-CoA_DH_CS"/>
</dbReference>
<dbReference type="InterPro" id="IPR006176">
    <property type="entry name" value="3-OHacyl-CoA_DH_NAD-bd"/>
</dbReference>
<dbReference type="InterPro" id="IPR006108">
    <property type="entry name" value="3HC_DH_C"/>
</dbReference>
<dbReference type="InterPro" id="IPR008927">
    <property type="entry name" value="6-PGluconate_DH-like_C_sf"/>
</dbReference>
<dbReference type="InterPro" id="IPR029045">
    <property type="entry name" value="ClpP/crotonase-like_dom_sf"/>
</dbReference>
<dbReference type="InterPro" id="IPR001753">
    <property type="entry name" value="Enoyl-CoA_hydra/iso"/>
</dbReference>
<dbReference type="InterPro" id="IPR050136">
    <property type="entry name" value="FA_oxidation_alpha_subunit"/>
</dbReference>
<dbReference type="InterPro" id="IPR012799">
    <property type="entry name" value="FadB"/>
</dbReference>
<dbReference type="InterPro" id="IPR036291">
    <property type="entry name" value="NAD(P)-bd_dom_sf"/>
</dbReference>
<dbReference type="NCBIfam" id="TIGR02437">
    <property type="entry name" value="FadB"/>
    <property type="match status" value="1"/>
</dbReference>
<dbReference type="NCBIfam" id="NF008727">
    <property type="entry name" value="PRK11730.1"/>
    <property type="match status" value="1"/>
</dbReference>
<dbReference type="PANTHER" id="PTHR43612">
    <property type="entry name" value="TRIFUNCTIONAL ENZYME SUBUNIT ALPHA"/>
    <property type="match status" value="1"/>
</dbReference>
<dbReference type="PANTHER" id="PTHR43612:SF3">
    <property type="entry name" value="TRIFUNCTIONAL ENZYME SUBUNIT ALPHA, MITOCHONDRIAL"/>
    <property type="match status" value="1"/>
</dbReference>
<dbReference type="Pfam" id="PF00725">
    <property type="entry name" value="3HCDH"/>
    <property type="match status" value="2"/>
</dbReference>
<dbReference type="Pfam" id="PF02737">
    <property type="entry name" value="3HCDH_N"/>
    <property type="match status" value="1"/>
</dbReference>
<dbReference type="Pfam" id="PF00378">
    <property type="entry name" value="ECH_1"/>
    <property type="match status" value="1"/>
</dbReference>
<dbReference type="SUPFAM" id="SSF48179">
    <property type="entry name" value="6-phosphogluconate dehydrogenase C-terminal domain-like"/>
    <property type="match status" value="2"/>
</dbReference>
<dbReference type="SUPFAM" id="SSF52096">
    <property type="entry name" value="ClpP/crotonase"/>
    <property type="match status" value="1"/>
</dbReference>
<dbReference type="SUPFAM" id="SSF51735">
    <property type="entry name" value="NAD(P)-binding Rossmann-fold domains"/>
    <property type="match status" value="1"/>
</dbReference>
<dbReference type="PROSITE" id="PS00067">
    <property type="entry name" value="3HCDH"/>
    <property type="match status" value="1"/>
</dbReference>